<gene>
    <name type="ordered locus">HS_0993</name>
</gene>
<reference key="1">
    <citation type="journal article" date="2007" name="J. Bacteriol.">
        <title>Complete genome sequence of Haemophilus somnus (Histophilus somni) strain 129Pt and comparison to Haemophilus ducreyi 35000HP and Haemophilus influenzae Rd.</title>
        <authorList>
            <person name="Challacombe J.F."/>
            <person name="Duncan A.J."/>
            <person name="Brettin T.S."/>
            <person name="Bruce D."/>
            <person name="Chertkov O."/>
            <person name="Detter J.C."/>
            <person name="Han C.S."/>
            <person name="Misra M."/>
            <person name="Richardson P."/>
            <person name="Tapia R."/>
            <person name="Thayer N."/>
            <person name="Xie G."/>
            <person name="Inzana T.J."/>
        </authorList>
    </citation>
    <scope>NUCLEOTIDE SEQUENCE [LARGE SCALE GENOMIC DNA]</scope>
    <source>
        <strain>129Pt</strain>
    </source>
</reference>
<feature type="chain" id="PRO_0000388885" description="UPF0756 membrane protein HS_0993">
    <location>
        <begin position="1"/>
        <end position="151"/>
    </location>
</feature>
<feature type="transmembrane region" description="Helical" evidence="1">
    <location>
        <begin position="1"/>
        <end position="21"/>
    </location>
</feature>
<feature type="transmembrane region" description="Helical" evidence="1">
    <location>
        <begin position="52"/>
        <end position="72"/>
    </location>
</feature>
<feature type="transmembrane region" description="Helical" evidence="1">
    <location>
        <begin position="81"/>
        <end position="101"/>
    </location>
</feature>
<feature type="transmembrane region" description="Helical" evidence="1">
    <location>
        <begin position="123"/>
        <end position="143"/>
    </location>
</feature>
<evidence type="ECO:0000255" key="1">
    <source>
        <dbReference type="HAMAP-Rule" id="MF_01874"/>
    </source>
</evidence>
<sequence>MSLQFNSIALLLVSLILLGVLGNNSSITISATILLLMQQTFLAKYIPFTEKYGVNIGIIILTIGVLSPIVSGKVQLPNWTALIHWKMFLAMAVGVLVAWFGGRGVNLMGTQPSLLTGLLVGTILGVAFLGGVPVGPLIAAGILSLFIGKTG</sequence>
<organism>
    <name type="scientific">Histophilus somni (strain 129Pt)</name>
    <name type="common">Haemophilus somnus</name>
    <dbReference type="NCBI Taxonomy" id="205914"/>
    <lineage>
        <taxon>Bacteria</taxon>
        <taxon>Pseudomonadati</taxon>
        <taxon>Pseudomonadota</taxon>
        <taxon>Gammaproteobacteria</taxon>
        <taxon>Pasteurellales</taxon>
        <taxon>Pasteurellaceae</taxon>
        <taxon>Histophilus</taxon>
    </lineage>
</organism>
<proteinExistence type="inferred from homology"/>
<name>Y993_HISS1</name>
<comment type="subcellular location">
    <subcellularLocation>
        <location evidence="1">Cell membrane</location>
        <topology evidence="1">Multi-pass membrane protein</topology>
    </subcellularLocation>
</comment>
<comment type="similarity">
    <text evidence="1">Belongs to the UPF0756 family.</text>
</comment>
<keyword id="KW-1003">Cell membrane</keyword>
<keyword id="KW-0472">Membrane</keyword>
<keyword id="KW-0812">Transmembrane</keyword>
<keyword id="KW-1133">Transmembrane helix</keyword>
<accession>Q0I372</accession>
<protein>
    <recommendedName>
        <fullName evidence="1">UPF0756 membrane protein HS_0993</fullName>
    </recommendedName>
</protein>
<dbReference type="EMBL" id="CP000436">
    <property type="protein sequence ID" value="ABI25268.1"/>
    <property type="molecule type" value="Genomic_DNA"/>
</dbReference>
<dbReference type="KEGG" id="hso:HS_0993"/>
<dbReference type="eggNOG" id="COG2707">
    <property type="taxonomic scope" value="Bacteria"/>
</dbReference>
<dbReference type="HOGENOM" id="CLU_125889_0_0_6"/>
<dbReference type="GO" id="GO:0005886">
    <property type="term" value="C:plasma membrane"/>
    <property type="evidence" value="ECO:0007669"/>
    <property type="project" value="UniProtKB-SubCell"/>
</dbReference>
<dbReference type="HAMAP" id="MF_01874">
    <property type="entry name" value="UPF0756"/>
    <property type="match status" value="1"/>
</dbReference>
<dbReference type="InterPro" id="IPR007382">
    <property type="entry name" value="UPF0756_TM"/>
</dbReference>
<dbReference type="PANTHER" id="PTHR38452">
    <property type="entry name" value="UPF0756 MEMBRANE PROTEIN YEAL"/>
    <property type="match status" value="1"/>
</dbReference>
<dbReference type="PANTHER" id="PTHR38452:SF1">
    <property type="entry name" value="UPF0756 MEMBRANE PROTEIN YEAL"/>
    <property type="match status" value="1"/>
</dbReference>
<dbReference type="Pfam" id="PF04284">
    <property type="entry name" value="DUF441"/>
    <property type="match status" value="1"/>
</dbReference>